<sequence>MSNKMWGGRFTDRPDAIMEEINVSIDVDRHLYAQDIAASKAHAAMLAAQGIITANDAKNIGKGLDTILSEIGAGKFTFKRALEDIHMNVESRLAELIGPAAGRLHTARSRNDQVATDFRLYVRDVLDETDAALAAFQFALAERALEQADTVMPGFTHLQTAQPVTFGHHLMAYVEMAARDRGRFQDARKRLNESPLGAAALAGTSFPIDRHATAQKLGFVRPMANSLDAVSDRDFVLETLSAASICAVHLSRFAEEIVIWTSPLVGLIRLSDKFTTGSSIMPQKRNPDAAELVRAKTGRVIGALNGLLIVMKGLPLAYQKDMQEDKQGAMEGFAALSLAIRAMTGMVRDLVPEHDRMRAAAGEGYATATDLADWLVRTLKMPFRDAHHVTGRIVGLAAKQGLALHELPLAEMQAVEKRITRDALAVLSVESSVKSRTSYGGTAPKNVRAQAKAWLKRLEKERKLG</sequence>
<reference key="1">
    <citation type="submission" date="2006-01" db="EMBL/GenBank/DDBJ databases">
        <title>Complete sequence of Rhodopseudomonas palustris HaA2.</title>
        <authorList>
            <consortium name="US DOE Joint Genome Institute"/>
            <person name="Copeland A."/>
            <person name="Lucas S."/>
            <person name="Lapidus A."/>
            <person name="Barry K."/>
            <person name="Detter J.C."/>
            <person name="Glavina T."/>
            <person name="Hammon N."/>
            <person name="Israni S."/>
            <person name="Pitluck S."/>
            <person name="Chain P."/>
            <person name="Malfatti S."/>
            <person name="Shin M."/>
            <person name="Vergez L."/>
            <person name="Schmutz J."/>
            <person name="Larimer F."/>
            <person name="Land M."/>
            <person name="Hauser L."/>
            <person name="Pelletier D.A."/>
            <person name="Kyrpides N."/>
            <person name="Anderson I."/>
            <person name="Oda Y."/>
            <person name="Harwood C.S."/>
            <person name="Richardson P."/>
        </authorList>
    </citation>
    <scope>NUCLEOTIDE SEQUENCE [LARGE SCALE GENOMIC DNA]</scope>
    <source>
        <strain>HaA2</strain>
    </source>
</reference>
<name>ARLY_RHOP2</name>
<proteinExistence type="inferred from homology"/>
<feature type="chain" id="PRO_0000240763" description="Argininosuccinate lyase">
    <location>
        <begin position="1"/>
        <end position="465"/>
    </location>
</feature>
<gene>
    <name evidence="1" type="primary">argH</name>
    <name type="ordered locus">RPB_0827</name>
</gene>
<organism>
    <name type="scientific">Rhodopseudomonas palustris (strain HaA2)</name>
    <dbReference type="NCBI Taxonomy" id="316058"/>
    <lineage>
        <taxon>Bacteria</taxon>
        <taxon>Pseudomonadati</taxon>
        <taxon>Pseudomonadota</taxon>
        <taxon>Alphaproteobacteria</taxon>
        <taxon>Hyphomicrobiales</taxon>
        <taxon>Nitrobacteraceae</taxon>
        <taxon>Rhodopseudomonas</taxon>
    </lineage>
</organism>
<comment type="catalytic activity">
    <reaction evidence="1">
        <text>2-(N(omega)-L-arginino)succinate = fumarate + L-arginine</text>
        <dbReference type="Rhea" id="RHEA:24020"/>
        <dbReference type="ChEBI" id="CHEBI:29806"/>
        <dbReference type="ChEBI" id="CHEBI:32682"/>
        <dbReference type="ChEBI" id="CHEBI:57472"/>
        <dbReference type="EC" id="4.3.2.1"/>
    </reaction>
</comment>
<comment type="pathway">
    <text evidence="1">Amino-acid biosynthesis; L-arginine biosynthesis; L-arginine from L-ornithine and carbamoyl phosphate: step 3/3.</text>
</comment>
<comment type="subcellular location">
    <subcellularLocation>
        <location evidence="1">Cytoplasm</location>
    </subcellularLocation>
</comment>
<comment type="similarity">
    <text evidence="1">Belongs to the lyase 1 family. Argininosuccinate lyase subfamily.</text>
</comment>
<evidence type="ECO:0000255" key="1">
    <source>
        <dbReference type="HAMAP-Rule" id="MF_00006"/>
    </source>
</evidence>
<protein>
    <recommendedName>
        <fullName evidence="1">Argininosuccinate lyase</fullName>
        <shortName evidence="1">ASAL</shortName>
        <ecNumber evidence="1">4.3.2.1</ecNumber>
    </recommendedName>
    <alternativeName>
        <fullName evidence="1">Arginosuccinase</fullName>
    </alternativeName>
</protein>
<keyword id="KW-0028">Amino-acid biosynthesis</keyword>
<keyword id="KW-0055">Arginine biosynthesis</keyword>
<keyword id="KW-0963">Cytoplasm</keyword>
<keyword id="KW-0456">Lyase</keyword>
<keyword id="KW-1185">Reference proteome</keyword>
<accession>Q2J1X2</accession>
<dbReference type="EC" id="4.3.2.1" evidence="1"/>
<dbReference type="EMBL" id="CP000250">
    <property type="protein sequence ID" value="ABD05538.1"/>
    <property type="molecule type" value="Genomic_DNA"/>
</dbReference>
<dbReference type="RefSeq" id="WP_011439727.1">
    <property type="nucleotide sequence ID" value="NC_007778.1"/>
</dbReference>
<dbReference type="SMR" id="Q2J1X2"/>
<dbReference type="STRING" id="316058.RPB_0827"/>
<dbReference type="KEGG" id="rpb:RPB_0827"/>
<dbReference type="eggNOG" id="COG0165">
    <property type="taxonomic scope" value="Bacteria"/>
</dbReference>
<dbReference type="HOGENOM" id="CLU_027272_2_3_5"/>
<dbReference type="OrthoDB" id="9769623at2"/>
<dbReference type="UniPathway" id="UPA00068">
    <property type="reaction ID" value="UER00114"/>
</dbReference>
<dbReference type="Proteomes" id="UP000008809">
    <property type="component" value="Chromosome"/>
</dbReference>
<dbReference type="GO" id="GO:0005829">
    <property type="term" value="C:cytosol"/>
    <property type="evidence" value="ECO:0007669"/>
    <property type="project" value="TreeGrafter"/>
</dbReference>
<dbReference type="GO" id="GO:0004056">
    <property type="term" value="F:argininosuccinate lyase activity"/>
    <property type="evidence" value="ECO:0007669"/>
    <property type="project" value="UniProtKB-UniRule"/>
</dbReference>
<dbReference type="GO" id="GO:0042450">
    <property type="term" value="P:arginine biosynthetic process via ornithine"/>
    <property type="evidence" value="ECO:0007669"/>
    <property type="project" value="InterPro"/>
</dbReference>
<dbReference type="GO" id="GO:0006526">
    <property type="term" value="P:L-arginine biosynthetic process"/>
    <property type="evidence" value="ECO:0007669"/>
    <property type="project" value="UniProtKB-UniRule"/>
</dbReference>
<dbReference type="CDD" id="cd01359">
    <property type="entry name" value="Argininosuccinate_lyase"/>
    <property type="match status" value="1"/>
</dbReference>
<dbReference type="FunFam" id="1.10.275.10:FF:000002">
    <property type="entry name" value="Argininosuccinate lyase"/>
    <property type="match status" value="1"/>
</dbReference>
<dbReference type="FunFam" id="1.10.40.30:FF:000001">
    <property type="entry name" value="Argininosuccinate lyase"/>
    <property type="match status" value="1"/>
</dbReference>
<dbReference type="FunFam" id="1.20.200.10:FF:000015">
    <property type="entry name" value="argininosuccinate lyase isoform X2"/>
    <property type="match status" value="1"/>
</dbReference>
<dbReference type="Gene3D" id="1.10.40.30">
    <property type="entry name" value="Fumarase/aspartase (C-terminal domain)"/>
    <property type="match status" value="1"/>
</dbReference>
<dbReference type="Gene3D" id="1.20.200.10">
    <property type="entry name" value="Fumarase/aspartase (Central domain)"/>
    <property type="match status" value="1"/>
</dbReference>
<dbReference type="Gene3D" id="1.10.275.10">
    <property type="entry name" value="Fumarase/aspartase (N-terminal domain)"/>
    <property type="match status" value="1"/>
</dbReference>
<dbReference type="HAMAP" id="MF_00006">
    <property type="entry name" value="Arg_succ_lyase"/>
    <property type="match status" value="1"/>
</dbReference>
<dbReference type="InterPro" id="IPR029419">
    <property type="entry name" value="Arg_succ_lyase_C"/>
</dbReference>
<dbReference type="InterPro" id="IPR009049">
    <property type="entry name" value="Argininosuccinate_lyase"/>
</dbReference>
<dbReference type="InterPro" id="IPR024083">
    <property type="entry name" value="Fumarase/histidase_N"/>
</dbReference>
<dbReference type="InterPro" id="IPR020557">
    <property type="entry name" value="Fumarate_lyase_CS"/>
</dbReference>
<dbReference type="InterPro" id="IPR000362">
    <property type="entry name" value="Fumarate_lyase_fam"/>
</dbReference>
<dbReference type="InterPro" id="IPR022761">
    <property type="entry name" value="Fumarate_lyase_N"/>
</dbReference>
<dbReference type="InterPro" id="IPR008948">
    <property type="entry name" value="L-Aspartase-like"/>
</dbReference>
<dbReference type="NCBIfam" id="TIGR00838">
    <property type="entry name" value="argH"/>
    <property type="match status" value="1"/>
</dbReference>
<dbReference type="PANTHER" id="PTHR43814">
    <property type="entry name" value="ARGININOSUCCINATE LYASE"/>
    <property type="match status" value="1"/>
</dbReference>
<dbReference type="PANTHER" id="PTHR43814:SF1">
    <property type="entry name" value="ARGININOSUCCINATE LYASE"/>
    <property type="match status" value="1"/>
</dbReference>
<dbReference type="Pfam" id="PF14698">
    <property type="entry name" value="ASL_C2"/>
    <property type="match status" value="1"/>
</dbReference>
<dbReference type="Pfam" id="PF00206">
    <property type="entry name" value="Lyase_1"/>
    <property type="match status" value="1"/>
</dbReference>
<dbReference type="PRINTS" id="PR00145">
    <property type="entry name" value="ARGSUCLYASE"/>
</dbReference>
<dbReference type="PRINTS" id="PR00149">
    <property type="entry name" value="FUMRATELYASE"/>
</dbReference>
<dbReference type="SUPFAM" id="SSF48557">
    <property type="entry name" value="L-aspartase-like"/>
    <property type="match status" value="1"/>
</dbReference>
<dbReference type="PROSITE" id="PS00163">
    <property type="entry name" value="FUMARATE_LYASES"/>
    <property type="match status" value="1"/>
</dbReference>